<organism>
    <name type="scientific">Azotobacter vinelandii (strain DJ / ATCC BAA-1303)</name>
    <dbReference type="NCBI Taxonomy" id="322710"/>
    <lineage>
        <taxon>Bacteria</taxon>
        <taxon>Pseudomonadati</taxon>
        <taxon>Pseudomonadota</taxon>
        <taxon>Gammaproteobacteria</taxon>
        <taxon>Pseudomonadales</taxon>
        <taxon>Pseudomonadaceae</taxon>
        <taxon>Azotobacter</taxon>
    </lineage>
</organism>
<evidence type="ECO:0000255" key="1">
    <source>
        <dbReference type="HAMAP-Rule" id="MF_00179"/>
    </source>
</evidence>
<sequence>MSVVFVAASKLPTPFGVFTMHGFLDEATGKEHVALTLGTVDDGAPVLGRLHSECLTGDALFSLRCDCGFQLEAALRAIAAEGRGVLLYLRQEGRGIGLLNKIRAYKLQDAGADTVEANERLGFRADQRDYGICKPMLEHLGITAIKLMTNNPRKVKALEGAGIQVTERVPLQTGLNPHNQKYLATKAGKLGHLLGSLHQGEVETPTGS</sequence>
<reference key="1">
    <citation type="journal article" date="2009" name="J. Bacteriol.">
        <title>Genome sequence of Azotobacter vinelandii, an obligate aerobe specialized to support diverse anaerobic metabolic processes.</title>
        <authorList>
            <person name="Setubal J.C."/>
            <person name="Dos Santos P."/>
            <person name="Goldman B.S."/>
            <person name="Ertesvaag H."/>
            <person name="Espin G."/>
            <person name="Rubio L.M."/>
            <person name="Valla S."/>
            <person name="Almeida N.F."/>
            <person name="Balasubramanian D."/>
            <person name="Cromes L."/>
            <person name="Curatti L."/>
            <person name="Du Z."/>
            <person name="Godsy E."/>
            <person name="Goodner B."/>
            <person name="Hellner-Burris K."/>
            <person name="Hernandez J.A."/>
            <person name="Houmiel K."/>
            <person name="Imperial J."/>
            <person name="Kennedy C."/>
            <person name="Larson T.J."/>
            <person name="Latreille P."/>
            <person name="Ligon L.S."/>
            <person name="Lu J."/>
            <person name="Maerk M."/>
            <person name="Miller N.M."/>
            <person name="Norton S."/>
            <person name="O'Carroll I.P."/>
            <person name="Paulsen I."/>
            <person name="Raulfs E.C."/>
            <person name="Roemer R."/>
            <person name="Rosser J."/>
            <person name="Segura D."/>
            <person name="Slater S."/>
            <person name="Stricklin S.L."/>
            <person name="Studholme D.J."/>
            <person name="Sun J."/>
            <person name="Viana C.J."/>
            <person name="Wallin E."/>
            <person name="Wang B."/>
            <person name="Wheeler C."/>
            <person name="Zhu H."/>
            <person name="Dean D.R."/>
            <person name="Dixon R."/>
            <person name="Wood D."/>
        </authorList>
    </citation>
    <scope>NUCLEOTIDE SEQUENCE [LARGE SCALE GENOMIC DNA]</scope>
    <source>
        <strain>DJ / ATCC BAA-1303</strain>
    </source>
</reference>
<keyword id="KW-0342">GTP-binding</keyword>
<keyword id="KW-0378">Hydrolase</keyword>
<keyword id="KW-0479">Metal-binding</keyword>
<keyword id="KW-0547">Nucleotide-binding</keyword>
<keyword id="KW-0686">Riboflavin biosynthesis</keyword>
<keyword id="KW-0862">Zinc</keyword>
<accession>C1DLI3</accession>
<gene>
    <name evidence="1" type="primary">ribA</name>
    <name type="ordered locus">Avin_06800</name>
</gene>
<protein>
    <recommendedName>
        <fullName evidence="1">GTP cyclohydrolase-2</fullName>
        <ecNumber evidence="1">3.5.4.25</ecNumber>
    </recommendedName>
    <alternativeName>
        <fullName evidence="1">GTP cyclohydrolase II</fullName>
    </alternativeName>
</protein>
<dbReference type="EC" id="3.5.4.25" evidence="1"/>
<dbReference type="EMBL" id="CP001157">
    <property type="protein sequence ID" value="ACO76931.1"/>
    <property type="molecule type" value="Genomic_DNA"/>
</dbReference>
<dbReference type="RefSeq" id="WP_012699356.1">
    <property type="nucleotide sequence ID" value="NC_012560.1"/>
</dbReference>
<dbReference type="SMR" id="C1DLI3"/>
<dbReference type="STRING" id="322710.Avin_06800"/>
<dbReference type="EnsemblBacteria" id="ACO76931">
    <property type="protein sequence ID" value="ACO76931"/>
    <property type="gene ID" value="Avin_06800"/>
</dbReference>
<dbReference type="GeneID" id="88184089"/>
<dbReference type="KEGG" id="avn:Avin_06800"/>
<dbReference type="eggNOG" id="COG0807">
    <property type="taxonomic scope" value="Bacteria"/>
</dbReference>
<dbReference type="HOGENOM" id="CLU_020273_2_1_6"/>
<dbReference type="OrthoDB" id="9793111at2"/>
<dbReference type="UniPathway" id="UPA00275">
    <property type="reaction ID" value="UER00400"/>
</dbReference>
<dbReference type="Proteomes" id="UP000002424">
    <property type="component" value="Chromosome"/>
</dbReference>
<dbReference type="GO" id="GO:0005829">
    <property type="term" value="C:cytosol"/>
    <property type="evidence" value="ECO:0007669"/>
    <property type="project" value="TreeGrafter"/>
</dbReference>
<dbReference type="GO" id="GO:0005525">
    <property type="term" value="F:GTP binding"/>
    <property type="evidence" value="ECO:0007669"/>
    <property type="project" value="UniProtKB-KW"/>
</dbReference>
<dbReference type="GO" id="GO:0003935">
    <property type="term" value="F:GTP cyclohydrolase II activity"/>
    <property type="evidence" value="ECO:0007669"/>
    <property type="project" value="UniProtKB-UniRule"/>
</dbReference>
<dbReference type="GO" id="GO:0008270">
    <property type="term" value="F:zinc ion binding"/>
    <property type="evidence" value="ECO:0007669"/>
    <property type="project" value="UniProtKB-UniRule"/>
</dbReference>
<dbReference type="GO" id="GO:0009231">
    <property type="term" value="P:riboflavin biosynthetic process"/>
    <property type="evidence" value="ECO:0007669"/>
    <property type="project" value="UniProtKB-UniRule"/>
</dbReference>
<dbReference type="CDD" id="cd00641">
    <property type="entry name" value="GTP_cyclohydro2"/>
    <property type="match status" value="1"/>
</dbReference>
<dbReference type="FunFam" id="3.40.50.10990:FF:000002">
    <property type="entry name" value="GTP cyclohydrolase-2"/>
    <property type="match status" value="1"/>
</dbReference>
<dbReference type="Gene3D" id="3.40.50.10990">
    <property type="entry name" value="GTP cyclohydrolase II"/>
    <property type="match status" value="1"/>
</dbReference>
<dbReference type="HAMAP" id="MF_00179">
    <property type="entry name" value="RibA"/>
    <property type="match status" value="1"/>
</dbReference>
<dbReference type="InterPro" id="IPR032677">
    <property type="entry name" value="GTP_cyclohydro_II"/>
</dbReference>
<dbReference type="InterPro" id="IPR000926">
    <property type="entry name" value="RibA"/>
</dbReference>
<dbReference type="InterPro" id="IPR036144">
    <property type="entry name" value="RibA-like_sf"/>
</dbReference>
<dbReference type="NCBIfam" id="NF001591">
    <property type="entry name" value="PRK00393.1"/>
    <property type="match status" value="1"/>
</dbReference>
<dbReference type="NCBIfam" id="TIGR00505">
    <property type="entry name" value="ribA"/>
    <property type="match status" value="1"/>
</dbReference>
<dbReference type="PANTHER" id="PTHR21327:SF18">
    <property type="entry name" value="3,4-DIHYDROXY-2-BUTANONE 4-PHOSPHATE SYNTHASE"/>
    <property type="match status" value="1"/>
</dbReference>
<dbReference type="PANTHER" id="PTHR21327">
    <property type="entry name" value="GTP CYCLOHYDROLASE II-RELATED"/>
    <property type="match status" value="1"/>
</dbReference>
<dbReference type="Pfam" id="PF00925">
    <property type="entry name" value="GTP_cyclohydro2"/>
    <property type="match status" value="1"/>
</dbReference>
<dbReference type="SUPFAM" id="SSF142695">
    <property type="entry name" value="RibA-like"/>
    <property type="match status" value="1"/>
</dbReference>
<proteinExistence type="inferred from homology"/>
<comment type="function">
    <text evidence="1">Catalyzes the conversion of GTP to 2,5-diamino-6-ribosylamino-4(3H)-pyrimidinone 5'-phosphate (DARP), formate and pyrophosphate.</text>
</comment>
<comment type="catalytic activity">
    <reaction evidence="1">
        <text>GTP + 4 H2O = 2,5-diamino-6-hydroxy-4-(5-phosphoribosylamino)-pyrimidine + formate + 2 phosphate + 3 H(+)</text>
        <dbReference type="Rhea" id="RHEA:23704"/>
        <dbReference type="ChEBI" id="CHEBI:15377"/>
        <dbReference type="ChEBI" id="CHEBI:15378"/>
        <dbReference type="ChEBI" id="CHEBI:15740"/>
        <dbReference type="ChEBI" id="CHEBI:37565"/>
        <dbReference type="ChEBI" id="CHEBI:43474"/>
        <dbReference type="ChEBI" id="CHEBI:58614"/>
        <dbReference type="EC" id="3.5.4.25"/>
    </reaction>
</comment>
<comment type="cofactor">
    <cofactor evidence="1">
        <name>Zn(2+)</name>
        <dbReference type="ChEBI" id="CHEBI:29105"/>
    </cofactor>
    <text evidence="1">Binds 1 zinc ion per subunit.</text>
</comment>
<comment type="pathway">
    <text evidence="1">Cofactor biosynthesis; riboflavin biosynthesis; 5-amino-6-(D-ribitylamino)uracil from GTP: step 1/4.</text>
</comment>
<comment type="similarity">
    <text evidence="1">Belongs to the GTP cyclohydrolase II family.</text>
</comment>
<feature type="chain" id="PRO_1000203811" description="GTP cyclohydrolase-2">
    <location>
        <begin position="1"/>
        <end position="208"/>
    </location>
</feature>
<feature type="active site" description="Proton acceptor" evidence="1">
    <location>
        <position position="126"/>
    </location>
</feature>
<feature type="active site" description="Nucleophile" evidence="1">
    <location>
        <position position="128"/>
    </location>
</feature>
<feature type="binding site" evidence="1">
    <location>
        <begin position="49"/>
        <end position="53"/>
    </location>
    <ligand>
        <name>GTP</name>
        <dbReference type="ChEBI" id="CHEBI:37565"/>
    </ligand>
</feature>
<feature type="binding site" evidence="1">
    <location>
        <position position="54"/>
    </location>
    <ligand>
        <name>Zn(2+)</name>
        <dbReference type="ChEBI" id="CHEBI:29105"/>
        <note>catalytic</note>
    </ligand>
</feature>
<feature type="binding site" evidence="1">
    <location>
        <position position="65"/>
    </location>
    <ligand>
        <name>Zn(2+)</name>
        <dbReference type="ChEBI" id="CHEBI:29105"/>
        <note>catalytic</note>
    </ligand>
</feature>
<feature type="binding site" evidence="1">
    <location>
        <position position="67"/>
    </location>
    <ligand>
        <name>Zn(2+)</name>
        <dbReference type="ChEBI" id="CHEBI:29105"/>
        <note>catalytic</note>
    </ligand>
</feature>
<feature type="binding site" evidence="1">
    <location>
        <position position="70"/>
    </location>
    <ligand>
        <name>GTP</name>
        <dbReference type="ChEBI" id="CHEBI:37565"/>
    </ligand>
</feature>
<feature type="binding site" evidence="1">
    <location>
        <begin position="92"/>
        <end position="94"/>
    </location>
    <ligand>
        <name>GTP</name>
        <dbReference type="ChEBI" id="CHEBI:37565"/>
    </ligand>
</feature>
<feature type="binding site" evidence="1">
    <location>
        <position position="114"/>
    </location>
    <ligand>
        <name>GTP</name>
        <dbReference type="ChEBI" id="CHEBI:37565"/>
    </ligand>
</feature>
<feature type="binding site" evidence="1">
    <location>
        <position position="149"/>
    </location>
    <ligand>
        <name>GTP</name>
        <dbReference type="ChEBI" id="CHEBI:37565"/>
    </ligand>
</feature>
<feature type="binding site" evidence="1">
    <location>
        <position position="154"/>
    </location>
    <ligand>
        <name>GTP</name>
        <dbReference type="ChEBI" id="CHEBI:37565"/>
    </ligand>
</feature>
<name>RIBA_AZOVD</name>